<evidence type="ECO:0000250" key="1">
    <source>
        <dbReference type="UniProtKB" id="Q9BXK1"/>
    </source>
</evidence>
<evidence type="ECO:0000255" key="2">
    <source>
        <dbReference type="PROSITE-ProRule" id="PRU00042"/>
    </source>
</evidence>
<evidence type="ECO:0000256" key="3">
    <source>
        <dbReference type="SAM" id="MobiDB-lite"/>
    </source>
</evidence>
<evidence type="ECO:0000305" key="4"/>
<evidence type="ECO:0007744" key="5">
    <source>
    </source>
</evidence>
<accession>P58334</accession>
<accession>Q3U3Y4</accession>
<accession>Q8C8S2</accession>
<organism>
    <name type="scientific">Mus musculus</name>
    <name type="common">Mouse</name>
    <dbReference type="NCBI Taxonomy" id="10090"/>
    <lineage>
        <taxon>Eukaryota</taxon>
        <taxon>Metazoa</taxon>
        <taxon>Chordata</taxon>
        <taxon>Craniata</taxon>
        <taxon>Vertebrata</taxon>
        <taxon>Euteleostomi</taxon>
        <taxon>Mammalia</taxon>
        <taxon>Eutheria</taxon>
        <taxon>Euarchontoglires</taxon>
        <taxon>Glires</taxon>
        <taxon>Rodentia</taxon>
        <taxon>Myomorpha</taxon>
        <taxon>Muroidea</taxon>
        <taxon>Muridae</taxon>
        <taxon>Murinae</taxon>
        <taxon>Mus</taxon>
        <taxon>Mus</taxon>
    </lineage>
</organism>
<keyword id="KW-0238">DNA-binding</keyword>
<keyword id="KW-0479">Metal-binding</keyword>
<keyword id="KW-0539">Nucleus</keyword>
<keyword id="KW-0597">Phosphoprotein</keyword>
<keyword id="KW-1185">Reference proteome</keyword>
<keyword id="KW-0677">Repeat</keyword>
<keyword id="KW-0804">Transcription</keyword>
<keyword id="KW-0805">Transcription regulation</keyword>
<keyword id="KW-0862">Zinc</keyword>
<keyword id="KW-0863">Zinc-finger</keyword>
<reference key="1">
    <citation type="journal article" date="2001" name="Proc. Natl. Acad. Sci. U.S.A.">
        <title>Dopamine receptor regulating factor, DRRF: a zinc finger transcription factor.</title>
        <authorList>
            <person name="Hwang C.K."/>
            <person name="D'Souza U.M."/>
            <person name="Eisch A.J."/>
            <person name="Yajima S."/>
            <person name="Lammers C.-H."/>
            <person name="Yang Y."/>
            <person name="Lee S.-H."/>
            <person name="Kim Y.-M."/>
            <person name="Nestler E.J."/>
            <person name="Mouradian M.M."/>
        </authorList>
    </citation>
    <scope>NUCLEOTIDE SEQUENCE [MRNA]</scope>
    <source>
        <tissue>Neuroblastoma</tissue>
    </source>
</reference>
<reference key="2">
    <citation type="journal article" date="2005" name="Science">
        <title>The transcriptional landscape of the mammalian genome.</title>
        <authorList>
            <person name="Carninci P."/>
            <person name="Kasukawa T."/>
            <person name="Katayama S."/>
            <person name="Gough J."/>
            <person name="Frith M.C."/>
            <person name="Maeda N."/>
            <person name="Oyama R."/>
            <person name="Ravasi T."/>
            <person name="Lenhard B."/>
            <person name="Wells C."/>
            <person name="Kodzius R."/>
            <person name="Shimokawa K."/>
            <person name="Bajic V.B."/>
            <person name="Brenner S.E."/>
            <person name="Batalov S."/>
            <person name="Forrest A.R."/>
            <person name="Zavolan M."/>
            <person name="Davis M.J."/>
            <person name="Wilming L.G."/>
            <person name="Aidinis V."/>
            <person name="Allen J.E."/>
            <person name="Ambesi-Impiombato A."/>
            <person name="Apweiler R."/>
            <person name="Aturaliya R.N."/>
            <person name="Bailey T.L."/>
            <person name="Bansal M."/>
            <person name="Baxter L."/>
            <person name="Beisel K.W."/>
            <person name="Bersano T."/>
            <person name="Bono H."/>
            <person name="Chalk A.M."/>
            <person name="Chiu K.P."/>
            <person name="Choudhary V."/>
            <person name="Christoffels A."/>
            <person name="Clutterbuck D.R."/>
            <person name="Crowe M.L."/>
            <person name="Dalla E."/>
            <person name="Dalrymple B.P."/>
            <person name="de Bono B."/>
            <person name="Della Gatta G."/>
            <person name="di Bernardo D."/>
            <person name="Down T."/>
            <person name="Engstrom P."/>
            <person name="Fagiolini M."/>
            <person name="Faulkner G."/>
            <person name="Fletcher C.F."/>
            <person name="Fukushima T."/>
            <person name="Furuno M."/>
            <person name="Futaki S."/>
            <person name="Gariboldi M."/>
            <person name="Georgii-Hemming P."/>
            <person name="Gingeras T.R."/>
            <person name="Gojobori T."/>
            <person name="Green R.E."/>
            <person name="Gustincich S."/>
            <person name="Harbers M."/>
            <person name="Hayashi Y."/>
            <person name="Hensch T.K."/>
            <person name="Hirokawa N."/>
            <person name="Hill D."/>
            <person name="Huminiecki L."/>
            <person name="Iacono M."/>
            <person name="Ikeo K."/>
            <person name="Iwama A."/>
            <person name="Ishikawa T."/>
            <person name="Jakt M."/>
            <person name="Kanapin A."/>
            <person name="Katoh M."/>
            <person name="Kawasawa Y."/>
            <person name="Kelso J."/>
            <person name="Kitamura H."/>
            <person name="Kitano H."/>
            <person name="Kollias G."/>
            <person name="Krishnan S.P."/>
            <person name="Kruger A."/>
            <person name="Kummerfeld S.K."/>
            <person name="Kurochkin I.V."/>
            <person name="Lareau L.F."/>
            <person name="Lazarevic D."/>
            <person name="Lipovich L."/>
            <person name="Liu J."/>
            <person name="Liuni S."/>
            <person name="McWilliam S."/>
            <person name="Madan Babu M."/>
            <person name="Madera M."/>
            <person name="Marchionni L."/>
            <person name="Matsuda H."/>
            <person name="Matsuzawa S."/>
            <person name="Miki H."/>
            <person name="Mignone F."/>
            <person name="Miyake S."/>
            <person name="Morris K."/>
            <person name="Mottagui-Tabar S."/>
            <person name="Mulder N."/>
            <person name="Nakano N."/>
            <person name="Nakauchi H."/>
            <person name="Ng P."/>
            <person name="Nilsson R."/>
            <person name="Nishiguchi S."/>
            <person name="Nishikawa S."/>
            <person name="Nori F."/>
            <person name="Ohara O."/>
            <person name="Okazaki Y."/>
            <person name="Orlando V."/>
            <person name="Pang K.C."/>
            <person name="Pavan W.J."/>
            <person name="Pavesi G."/>
            <person name="Pesole G."/>
            <person name="Petrovsky N."/>
            <person name="Piazza S."/>
            <person name="Reed J."/>
            <person name="Reid J.F."/>
            <person name="Ring B.Z."/>
            <person name="Ringwald M."/>
            <person name="Rost B."/>
            <person name="Ruan Y."/>
            <person name="Salzberg S.L."/>
            <person name="Sandelin A."/>
            <person name="Schneider C."/>
            <person name="Schoenbach C."/>
            <person name="Sekiguchi K."/>
            <person name="Semple C.A."/>
            <person name="Seno S."/>
            <person name="Sessa L."/>
            <person name="Sheng Y."/>
            <person name="Shibata Y."/>
            <person name="Shimada H."/>
            <person name="Shimada K."/>
            <person name="Silva D."/>
            <person name="Sinclair B."/>
            <person name="Sperling S."/>
            <person name="Stupka E."/>
            <person name="Sugiura K."/>
            <person name="Sultana R."/>
            <person name="Takenaka Y."/>
            <person name="Taki K."/>
            <person name="Tammoja K."/>
            <person name="Tan S.L."/>
            <person name="Tang S."/>
            <person name="Taylor M.S."/>
            <person name="Tegner J."/>
            <person name="Teichmann S.A."/>
            <person name="Ueda H.R."/>
            <person name="van Nimwegen E."/>
            <person name="Verardo R."/>
            <person name="Wei C.L."/>
            <person name="Yagi K."/>
            <person name="Yamanishi H."/>
            <person name="Zabarovsky E."/>
            <person name="Zhu S."/>
            <person name="Zimmer A."/>
            <person name="Hide W."/>
            <person name="Bult C."/>
            <person name="Grimmond S.M."/>
            <person name="Teasdale R.D."/>
            <person name="Liu E.T."/>
            <person name="Brusic V."/>
            <person name="Quackenbush J."/>
            <person name="Wahlestedt C."/>
            <person name="Mattick J.S."/>
            <person name="Hume D.A."/>
            <person name="Kai C."/>
            <person name="Sasaki D."/>
            <person name="Tomaru Y."/>
            <person name="Fukuda S."/>
            <person name="Kanamori-Katayama M."/>
            <person name="Suzuki M."/>
            <person name="Aoki J."/>
            <person name="Arakawa T."/>
            <person name="Iida J."/>
            <person name="Imamura K."/>
            <person name="Itoh M."/>
            <person name="Kato T."/>
            <person name="Kawaji H."/>
            <person name="Kawagashira N."/>
            <person name="Kawashima T."/>
            <person name="Kojima M."/>
            <person name="Kondo S."/>
            <person name="Konno H."/>
            <person name="Nakano K."/>
            <person name="Ninomiya N."/>
            <person name="Nishio T."/>
            <person name="Okada M."/>
            <person name="Plessy C."/>
            <person name="Shibata K."/>
            <person name="Shiraki T."/>
            <person name="Suzuki S."/>
            <person name="Tagami M."/>
            <person name="Waki K."/>
            <person name="Watahiki A."/>
            <person name="Okamura-Oho Y."/>
            <person name="Suzuki H."/>
            <person name="Kawai J."/>
            <person name="Hayashizaki Y."/>
        </authorList>
    </citation>
    <scope>NUCLEOTIDE SEQUENCE [LARGE SCALE MRNA]</scope>
    <source>
        <strain>C57BL/6J</strain>
        <strain>NOD</strain>
        <tissue>Retina</tissue>
    </source>
</reference>
<reference key="3">
    <citation type="journal article" date="2010" name="Cell">
        <title>A tissue-specific atlas of mouse protein phosphorylation and expression.</title>
        <authorList>
            <person name="Huttlin E.L."/>
            <person name="Jedrychowski M.P."/>
            <person name="Elias J.E."/>
            <person name="Goswami T."/>
            <person name="Rad R."/>
            <person name="Beausoleil S.A."/>
            <person name="Villen J."/>
            <person name="Haas W."/>
            <person name="Sowa M.E."/>
            <person name="Gygi S.P."/>
        </authorList>
    </citation>
    <scope>PHOSPHORYLATION [LARGE SCALE ANALYSIS] AT SER-103</scope>
    <scope>IDENTIFICATION BY MASS SPECTROMETRY [LARGE SCALE ANALYSIS]</scope>
    <source>
        <tissue>Lung</tissue>
        <tissue>Spleen</tissue>
        <tissue>Testis</tissue>
    </source>
</reference>
<gene>
    <name type="primary">Klf16</name>
    <name type="synonym">Bteb4</name>
    <name type="synonym">Drrf</name>
</gene>
<comment type="function">
    <text>Transcription factor that binds GC and GT boxes in the D1A, D2 and D3 dopamine receptor promoters and displaces Sp1 and Sp3 from these sequences. It modulates dopaminergic transmission in the brain by repressing or activating transcription from several different promoters depending on cellular context.</text>
</comment>
<comment type="subcellular location">
    <subcellularLocation>
        <location>Nucleus</location>
    </subcellularLocation>
</comment>
<comment type="tissue specificity">
    <text>High expression in brain; olfactory tubercle, olfactory bulb, nucleus accumbens, striatum, hippocampal CA1 region, amygdala, dentate gyrus and frontal cortex. Moderate expression in hippocampal CA2-3 regions, piriform cortex, septum, and distinct thalamic nuclei. Low expression in the cerebellum.</text>
</comment>
<comment type="domain">
    <text>The Ala/Pro-rich domain may contain discrete activation and repression subdomains and also can mediate protein-protein interactions.</text>
</comment>
<comment type="similarity">
    <text evidence="4">Belongs to the Sp1 C2H2-type zinc-finger protein family.</text>
</comment>
<dbReference type="EMBL" id="AF283891">
    <property type="protein sequence ID" value="AAK66968.1"/>
    <property type="molecule type" value="mRNA"/>
</dbReference>
<dbReference type="EMBL" id="AK044577">
    <property type="protein sequence ID" value="BAC31987.1"/>
    <property type="molecule type" value="mRNA"/>
</dbReference>
<dbReference type="EMBL" id="AK154524">
    <property type="protein sequence ID" value="BAE32651.1"/>
    <property type="molecule type" value="mRNA"/>
</dbReference>
<dbReference type="CCDS" id="CCDS24026.1"/>
<dbReference type="RefSeq" id="NP_510962.2">
    <property type="nucleotide sequence ID" value="NM_078477.2"/>
</dbReference>
<dbReference type="SMR" id="P58334"/>
<dbReference type="BioGRID" id="228243">
    <property type="interactions" value="1"/>
</dbReference>
<dbReference type="FunCoup" id="P58334">
    <property type="interactions" value="17"/>
</dbReference>
<dbReference type="IntAct" id="P58334">
    <property type="interactions" value="1"/>
</dbReference>
<dbReference type="STRING" id="10090.ENSMUSP00000048825"/>
<dbReference type="GlyGen" id="P58334">
    <property type="glycosylation" value="6 sites, 1 O-linked glycan (4 sites)"/>
</dbReference>
<dbReference type="iPTMnet" id="P58334"/>
<dbReference type="PhosphoSitePlus" id="P58334"/>
<dbReference type="PaxDb" id="10090-ENSMUSP00000048825"/>
<dbReference type="ProteomicsDB" id="263648"/>
<dbReference type="Pumba" id="P58334"/>
<dbReference type="Antibodypedia" id="22829">
    <property type="antibodies" value="189 antibodies from 27 providers"/>
</dbReference>
<dbReference type="DNASU" id="118445"/>
<dbReference type="Ensembl" id="ENSMUST00000038558.9">
    <property type="protein sequence ID" value="ENSMUSP00000048825.9"/>
    <property type="gene ID" value="ENSMUSG00000035397.9"/>
</dbReference>
<dbReference type="GeneID" id="118445"/>
<dbReference type="KEGG" id="mmu:118445"/>
<dbReference type="UCSC" id="uc007gdt.1">
    <property type="organism name" value="mouse"/>
</dbReference>
<dbReference type="AGR" id="MGI:2153049"/>
<dbReference type="CTD" id="83855"/>
<dbReference type="MGI" id="MGI:2153049">
    <property type="gene designation" value="Klf16"/>
</dbReference>
<dbReference type="VEuPathDB" id="HostDB:ENSMUSG00000035397"/>
<dbReference type="eggNOG" id="KOG1721">
    <property type="taxonomic scope" value="Eukaryota"/>
</dbReference>
<dbReference type="GeneTree" id="ENSGT00940000163280"/>
<dbReference type="HOGENOM" id="CLU_002678_33_2_1"/>
<dbReference type="InParanoid" id="P58334"/>
<dbReference type="OMA" id="FQGCIKV"/>
<dbReference type="OrthoDB" id="4748970at2759"/>
<dbReference type="PhylomeDB" id="P58334"/>
<dbReference type="TreeFam" id="TF351003"/>
<dbReference type="BioGRID-ORCS" id="118445">
    <property type="hits" value="11 hits in 78 CRISPR screens"/>
</dbReference>
<dbReference type="ChiTaRS" id="Klf16">
    <property type="organism name" value="mouse"/>
</dbReference>
<dbReference type="PRO" id="PR:P58334"/>
<dbReference type="Proteomes" id="UP000000589">
    <property type="component" value="Chromosome 10"/>
</dbReference>
<dbReference type="RNAct" id="P58334">
    <property type="molecule type" value="protein"/>
</dbReference>
<dbReference type="Bgee" id="ENSMUSG00000035397">
    <property type="expression patterns" value="Expressed in humerus cartilage element and 225 other cell types or tissues"/>
</dbReference>
<dbReference type="ExpressionAtlas" id="P58334">
    <property type="expression patterns" value="baseline and differential"/>
</dbReference>
<dbReference type="GO" id="GO:0005634">
    <property type="term" value="C:nucleus"/>
    <property type="evidence" value="ECO:0007669"/>
    <property type="project" value="UniProtKB-SubCell"/>
</dbReference>
<dbReference type="GO" id="GO:0003677">
    <property type="term" value="F:DNA binding"/>
    <property type="evidence" value="ECO:0000314"/>
    <property type="project" value="MGI"/>
</dbReference>
<dbReference type="GO" id="GO:0003700">
    <property type="term" value="F:DNA-binding transcription factor activity"/>
    <property type="evidence" value="ECO:0000314"/>
    <property type="project" value="MGI"/>
</dbReference>
<dbReference type="GO" id="GO:0001227">
    <property type="term" value="F:DNA-binding transcription repressor activity, RNA polymerase II-specific"/>
    <property type="evidence" value="ECO:0000314"/>
    <property type="project" value="NTNU_SB"/>
</dbReference>
<dbReference type="GO" id="GO:0000978">
    <property type="term" value="F:RNA polymerase II cis-regulatory region sequence-specific DNA binding"/>
    <property type="evidence" value="ECO:0000314"/>
    <property type="project" value="NTNU_SB"/>
</dbReference>
<dbReference type="GO" id="GO:0008270">
    <property type="term" value="F:zinc ion binding"/>
    <property type="evidence" value="ECO:0007669"/>
    <property type="project" value="UniProtKB-KW"/>
</dbReference>
<dbReference type="GO" id="GO:0007212">
    <property type="term" value="P:G protein-coupled dopamine receptor signaling pathway"/>
    <property type="evidence" value="ECO:0000314"/>
    <property type="project" value="MGI"/>
</dbReference>
<dbReference type="GO" id="GO:0000122">
    <property type="term" value="P:negative regulation of transcription by RNA polymerase II"/>
    <property type="evidence" value="ECO:0000314"/>
    <property type="project" value="NTNU_SB"/>
</dbReference>
<dbReference type="GO" id="GO:0006357">
    <property type="term" value="P:regulation of transcription by RNA polymerase II"/>
    <property type="evidence" value="ECO:0000314"/>
    <property type="project" value="MGI"/>
</dbReference>
<dbReference type="CDD" id="cd21573">
    <property type="entry name" value="KLF16_N"/>
    <property type="match status" value="1"/>
</dbReference>
<dbReference type="FunFam" id="3.30.160.60:FF:000595">
    <property type="entry name" value="Krueppel-like factor 14"/>
    <property type="match status" value="1"/>
</dbReference>
<dbReference type="FunFam" id="3.30.160.60:FF:000018">
    <property type="entry name" value="Krueppel-like factor 15"/>
    <property type="match status" value="1"/>
</dbReference>
<dbReference type="FunFam" id="3.30.160.60:FF:000125">
    <property type="entry name" value="Putative zinc finger protein 143"/>
    <property type="match status" value="1"/>
</dbReference>
<dbReference type="Gene3D" id="3.30.160.60">
    <property type="entry name" value="Classic Zinc Finger"/>
    <property type="match status" value="3"/>
</dbReference>
<dbReference type="InterPro" id="IPR036236">
    <property type="entry name" value="Znf_C2H2_sf"/>
</dbReference>
<dbReference type="InterPro" id="IPR013087">
    <property type="entry name" value="Znf_C2H2_type"/>
</dbReference>
<dbReference type="PANTHER" id="PTHR23235:SF71">
    <property type="entry name" value="KRUEPPEL-LIKE FACTOR 16"/>
    <property type="match status" value="1"/>
</dbReference>
<dbReference type="PANTHER" id="PTHR23235">
    <property type="entry name" value="KRUEPPEL-LIKE TRANSCRIPTION FACTOR"/>
    <property type="match status" value="1"/>
</dbReference>
<dbReference type="Pfam" id="PF00096">
    <property type="entry name" value="zf-C2H2"/>
    <property type="match status" value="2"/>
</dbReference>
<dbReference type="SMART" id="SM00355">
    <property type="entry name" value="ZnF_C2H2"/>
    <property type="match status" value="3"/>
</dbReference>
<dbReference type="SUPFAM" id="SSF57667">
    <property type="entry name" value="beta-beta-alpha zinc fingers"/>
    <property type="match status" value="2"/>
</dbReference>
<dbReference type="PROSITE" id="PS00028">
    <property type="entry name" value="ZINC_FINGER_C2H2_1"/>
    <property type="match status" value="3"/>
</dbReference>
<dbReference type="PROSITE" id="PS50157">
    <property type="entry name" value="ZINC_FINGER_C2H2_2"/>
    <property type="match status" value="3"/>
</dbReference>
<sequence>MSAAVACVDYFAADVLMAISSGAVVHRGRPGPEGAGPAAGLDVRATRREATPPGTPGAPPPPATAPGPGGATAAPHLLAASILADLRGGPVVATAASTAGGTSPVSSSSAASSPSSGRAPGAAKSHRCPFHGCAKAYYKSSHLKSHLRTHTGERPFACDWPGCDKKFARSDELARHHRTHTGEKRFPCPLCTKRFTRSDHLTKHARRHPGFRPELLRRPGARSVSPSDSLPCSLAGSPTPSPVPSPAPAGL</sequence>
<name>KLF16_MOUSE</name>
<protein>
    <recommendedName>
        <fullName>Krueppel-like factor 16</fullName>
    </recommendedName>
    <alternativeName>
        <fullName>Basic transcription element-binding protein 4</fullName>
        <shortName>BTE-binding protein 4</shortName>
    </alternativeName>
    <alternativeName>
        <fullName>Dopamine receptor-regulating factor</fullName>
    </alternativeName>
    <alternativeName>
        <fullName>Transcription factor BTEB4</fullName>
    </alternativeName>
</protein>
<feature type="chain" id="PRO_0000047159" description="Krueppel-like factor 16">
    <location>
        <begin position="1"/>
        <end position="251"/>
    </location>
</feature>
<feature type="zinc finger region" description="C2H2-type 1" evidence="2">
    <location>
        <begin position="126"/>
        <end position="150"/>
    </location>
</feature>
<feature type="zinc finger region" description="C2H2-type 2" evidence="2">
    <location>
        <begin position="156"/>
        <end position="180"/>
    </location>
</feature>
<feature type="zinc finger region" description="C2H2-type 3" evidence="2">
    <location>
        <begin position="186"/>
        <end position="208"/>
    </location>
</feature>
<feature type="region of interest" description="Disordered" evidence="3">
    <location>
        <begin position="48"/>
        <end position="72"/>
    </location>
</feature>
<feature type="region of interest" description="Disordered" evidence="3">
    <location>
        <begin position="95"/>
        <end position="125"/>
    </location>
</feature>
<feature type="region of interest" description="Disordered" evidence="3">
    <location>
        <begin position="201"/>
        <end position="251"/>
    </location>
</feature>
<feature type="compositionally biased region" description="Pro residues" evidence="3">
    <location>
        <begin position="53"/>
        <end position="65"/>
    </location>
</feature>
<feature type="compositionally biased region" description="Low complexity" evidence="3">
    <location>
        <begin position="95"/>
        <end position="123"/>
    </location>
</feature>
<feature type="compositionally biased region" description="Pro residues" evidence="3">
    <location>
        <begin position="239"/>
        <end position="251"/>
    </location>
</feature>
<feature type="modified residue" description="Phosphoserine" evidence="5">
    <location>
        <position position="103"/>
    </location>
</feature>
<feature type="modified residue" description="Phosphothreonine" evidence="1">
    <location>
        <position position="151"/>
    </location>
</feature>
<proteinExistence type="evidence at protein level"/>